<accession>Q59S27</accession>
<accession>A0A1D8PPA4</accession>
<accession>Q59RM6</accession>
<gene>
    <name type="primary">RTT106</name>
    <name type="ordered locus">CAALFM_C600190WA</name>
    <name type="ORF">CaO19.1177</name>
    <name type="ORF">CaO19.8769</name>
</gene>
<dbReference type="EMBL" id="CP017628">
    <property type="protein sequence ID" value="AOW29969.1"/>
    <property type="molecule type" value="Genomic_DNA"/>
</dbReference>
<dbReference type="RefSeq" id="XP_712295.2">
    <property type="nucleotide sequence ID" value="XM_707202.2"/>
</dbReference>
<dbReference type="SMR" id="Q59S27"/>
<dbReference type="FunCoup" id="Q59S27">
    <property type="interactions" value="145"/>
</dbReference>
<dbReference type="STRING" id="237561.Q59S27"/>
<dbReference type="EnsemblFungi" id="C6_00190W_A-T">
    <property type="protein sequence ID" value="C6_00190W_A-T-p1"/>
    <property type="gene ID" value="C6_00190W_A"/>
</dbReference>
<dbReference type="GeneID" id="3646080"/>
<dbReference type="KEGG" id="cal:CAALFM_C600190WA"/>
<dbReference type="CGD" id="CAL0000189137">
    <property type="gene designation" value="orf19.8769"/>
</dbReference>
<dbReference type="VEuPathDB" id="FungiDB:C6_00190W_A"/>
<dbReference type="HOGENOM" id="CLU_040939_0_0_1"/>
<dbReference type="InParanoid" id="Q59S27"/>
<dbReference type="OMA" id="TRLTFNV"/>
<dbReference type="OrthoDB" id="75754at2759"/>
<dbReference type="PRO" id="PR:Q59S27"/>
<dbReference type="Proteomes" id="UP000000559">
    <property type="component" value="Chromosome 6"/>
</dbReference>
<dbReference type="GO" id="GO:0005694">
    <property type="term" value="C:chromosome"/>
    <property type="evidence" value="ECO:0007669"/>
    <property type="project" value="UniProtKB-SubCell"/>
</dbReference>
<dbReference type="GO" id="GO:0005634">
    <property type="term" value="C:nucleus"/>
    <property type="evidence" value="ECO:0007669"/>
    <property type="project" value="UniProtKB-SubCell"/>
</dbReference>
<dbReference type="GO" id="GO:0003677">
    <property type="term" value="F:DNA binding"/>
    <property type="evidence" value="ECO:0007669"/>
    <property type="project" value="UniProtKB-KW"/>
</dbReference>
<dbReference type="GO" id="GO:0042393">
    <property type="term" value="F:histone binding"/>
    <property type="evidence" value="ECO:0000318"/>
    <property type="project" value="GO_Central"/>
</dbReference>
<dbReference type="GO" id="GO:0031491">
    <property type="term" value="F:nucleosome binding"/>
    <property type="evidence" value="ECO:0000318"/>
    <property type="project" value="GO_Central"/>
</dbReference>
<dbReference type="CDD" id="cd13304">
    <property type="entry name" value="PH2-like_Rtt106"/>
    <property type="match status" value="1"/>
</dbReference>
<dbReference type="Gene3D" id="2.30.29.120">
    <property type="match status" value="1"/>
</dbReference>
<dbReference type="Gene3D" id="2.30.29.30">
    <property type="entry name" value="Pleckstrin-homology domain (PH domain)/Phosphotyrosine-binding domain (PTB)"/>
    <property type="match status" value="1"/>
</dbReference>
<dbReference type="InterPro" id="IPR011993">
    <property type="entry name" value="PH-like_dom_sf"/>
</dbReference>
<dbReference type="InterPro" id="IPR013719">
    <property type="entry name" value="RTT106/SPT16-like_middle_dom"/>
</dbReference>
<dbReference type="InterPro" id="IPR050454">
    <property type="entry name" value="RTT106/SSRP1_HistChap/FACT"/>
</dbReference>
<dbReference type="InterPro" id="IPR040770">
    <property type="entry name" value="Rtt106_PH"/>
</dbReference>
<dbReference type="PANTHER" id="PTHR45849">
    <property type="entry name" value="FACT COMPLEX SUBUNIT SSRP1"/>
    <property type="match status" value="1"/>
</dbReference>
<dbReference type="PANTHER" id="PTHR45849:SF3">
    <property type="entry name" value="HISTONE CHAPERONE RTT106"/>
    <property type="match status" value="1"/>
</dbReference>
<dbReference type="Pfam" id="PF18469">
    <property type="entry name" value="PH_18"/>
    <property type="match status" value="1"/>
</dbReference>
<dbReference type="Pfam" id="PF08512">
    <property type="entry name" value="Rttp106-like_middle"/>
    <property type="match status" value="1"/>
</dbReference>
<dbReference type="SMART" id="SM01287">
    <property type="entry name" value="Rtt106"/>
    <property type="match status" value="1"/>
</dbReference>
<dbReference type="SUPFAM" id="SSF50729">
    <property type="entry name" value="PH domain-like"/>
    <property type="match status" value="1"/>
</dbReference>
<feature type="chain" id="PRO_0000320487" description="Histone chaperone RTT106">
    <location>
        <begin position="1"/>
        <end position="409"/>
    </location>
</feature>
<feature type="region of interest" description="Disordered" evidence="2">
    <location>
        <begin position="344"/>
        <end position="409"/>
    </location>
</feature>
<feature type="compositionally biased region" description="Acidic residues" evidence="2">
    <location>
        <begin position="361"/>
        <end position="386"/>
    </location>
</feature>
<feature type="compositionally biased region" description="Basic and acidic residues" evidence="2">
    <location>
        <begin position="394"/>
        <end position="409"/>
    </location>
</feature>
<sequence>MDSAWVQQLPPELQNDIKAVVEKDQSSFAAFDNLHAFLTGGTTKKRKLNAEPEEIPPETIIFEINEISFYSPVRKRMNLTLHLVEEDGNPSPALSIVNPSNNIPELTFTGLDQAVKLCLLLPILGNTTNTQKKAICYLCFWMHDENMSKDPIVCQMNLDLVKKSMIKNGKLPADIESKFITPRDALPLNPIQERIIDYFKRQFQLCGISMMNYMPCVSIFRNTFSLNDDNAIAMNTDGASQPALVMVNCHKGAKEGVLILLQANKTNPAHIIFGFKKPILVFEASQVLHTSYSNITRQTFSLNVVVLNKKQEQRELEFGMIDEKFYKVIDDFIKLQGINDATFNQEESGDDSIEIVHVNNNDDDDDEEDDDFQSEDSGSDVEEEYNSDLNEPLAAHEEDGVFERGIEIE</sequence>
<protein>
    <recommendedName>
        <fullName>Histone chaperone RTT106</fullName>
    </recommendedName>
</protein>
<name>RT106_CANAL</name>
<evidence type="ECO:0000250" key="1"/>
<evidence type="ECO:0000256" key="2">
    <source>
        <dbReference type="SAM" id="MobiDB-lite"/>
    </source>
</evidence>
<evidence type="ECO:0000305" key="3"/>
<proteinExistence type="inferred from homology"/>
<comment type="function">
    <text evidence="1">Histones H3 and H4 chaperone involved in the nucleosome formation and heterochromatin silencing. Required for the deposition of H3K56ac-carrying H3-H4 complex onto newly-replicated DNA. Plays a role in the transcriptional regulation of the cell-cycle dependent histone genes by creating a repressive structure at the core histone gene promoter (By similarity).</text>
</comment>
<comment type="subunit">
    <text evidence="1">Interacts with histones H3 and H4.</text>
</comment>
<comment type="subcellular location">
    <subcellularLocation>
        <location evidence="1">Nucleus</location>
    </subcellularLocation>
    <subcellularLocation>
        <location evidence="1">Chromosome</location>
    </subcellularLocation>
</comment>
<comment type="similarity">
    <text evidence="3">Belongs to the RTT106 family.</text>
</comment>
<keyword id="KW-0143">Chaperone</keyword>
<keyword id="KW-0158">Chromosome</keyword>
<keyword id="KW-0238">DNA-binding</keyword>
<keyword id="KW-0539">Nucleus</keyword>
<keyword id="KW-1185">Reference proteome</keyword>
<keyword id="KW-0804">Transcription</keyword>
<keyword id="KW-0805">Transcription regulation</keyword>
<reference key="1">
    <citation type="journal article" date="2004" name="Proc. Natl. Acad. Sci. U.S.A.">
        <title>The diploid genome sequence of Candida albicans.</title>
        <authorList>
            <person name="Jones T."/>
            <person name="Federspiel N.A."/>
            <person name="Chibana H."/>
            <person name="Dungan J."/>
            <person name="Kalman S."/>
            <person name="Magee B.B."/>
            <person name="Newport G."/>
            <person name="Thorstenson Y.R."/>
            <person name="Agabian N."/>
            <person name="Magee P.T."/>
            <person name="Davis R.W."/>
            <person name="Scherer S."/>
        </authorList>
    </citation>
    <scope>NUCLEOTIDE SEQUENCE [LARGE SCALE GENOMIC DNA]</scope>
    <source>
        <strain>SC5314 / ATCC MYA-2876</strain>
    </source>
</reference>
<reference key="2">
    <citation type="journal article" date="2007" name="Genome Biol.">
        <title>Assembly of the Candida albicans genome into sixteen supercontigs aligned on the eight chromosomes.</title>
        <authorList>
            <person name="van het Hoog M."/>
            <person name="Rast T.J."/>
            <person name="Martchenko M."/>
            <person name="Grindle S."/>
            <person name="Dignard D."/>
            <person name="Hogues H."/>
            <person name="Cuomo C."/>
            <person name="Berriman M."/>
            <person name="Scherer S."/>
            <person name="Magee B.B."/>
            <person name="Whiteway M."/>
            <person name="Chibana H."/>
            <person name="Nantel A."/>
            <person name="Magee P.T."/>
        </authorList>
    </citation>
    <scope>GENOME REANNOTATION</scope>
    <source>
        <strain>SC5314 / ATCC MYA-2876</strain>
    </source>
</reference>
<reference key="3">
    <citation type="journal article" date="2013" name="Genome Biol.">
        <title>Assembly of a phased diploid Candida albicans genome facilitates allele-specific measurements and provides a simple model for repeat and indel structure.</title>
        <authorList>
            <person name="Muzzey D."/>
            <person name="Schwartz K."/>
            <person name="Weissman J.S."/>
            <person name="Sherlock G."/>
        </authorList>
    </citation>
    <scope>NUCLEOTIDE SEQUENCE [LARGE SCALE GENOMIC DNA]</scope>
    <scope>GENOME REANNOTATION</scope>
    <source>
        <strain>SC5314 / ATCC MYA-2876</strain>
    </source>
</reference>
<organism>
    <name type="scientific">Candida albicans (strain SC5314 / ATCC MYA-2876)</name>
    <name type="common">Yeast</name>
    <dbReference type="NCBI Taxonomy" id="237561"/>
    <lineage>
        <taxon>Eukaryota</taxon>
        <taxon>Fungi</taxon>
        <taxon>Dikarya</taxon>
        <taxon>Ascomycota</taxon>
        <taxon>Saccharomycotina</taxon>
        <taxon>Pichiomycetes</taxon>
        <taxon>Debaryomycetaceae</taxon>
        <taxon>Candida/Lodderomyces clade</taxon>
        <taxon>Candida</taxon>
    </lineage>
</organism>